<sequence length="490" mass="51636">MRPAFALCLLWQALWPGPGGGEHPTADRAGCSASGACYSLHHATMKRQAAEEACILRGGALSTVRAGAELRAVLALLRAGPGPGGGSKDLLFWVALERRRSHCTLENEPLRGFSWLSSDPGGLESDTLQWVEEPQRSCTARRCAVLQATGGVEPAGWKEMRCHLRANGYLCKYQFEVLCPAPRPGAASNLSYRAPFQLHSAALDFSPPGTEVSALCRGQLPISVTCIADEIGARWDKLSGDVLCPCPGRYLRAGKCAELPNCLDDLGGFACECATGFELGKDGRSCVTSGEGQPTLGGTGVPTRRPPATATSPVPQRTWPIRVDEKLGETPLVPEQDNSVTSIPEIPRWGSQSTMSTLQMSLQAESKATITPSGSVISKFNSTTSSATPQAFDSSSAVVFIFVSTAVVVLVILTMTVLGLVKLCFHESPSSQPRKESMGPPGLESDPEPAALGSSSAHCTNNGVKVGDCDLRDRAEGALLAESPLGSSDA</sequence>
<reference key="1">
    <citation type="journal article" date="2004" name="Shi Yan Sheng Wu Xue Bao">
        <title>Cloning and characterization of a novel human ceg1 gene cDNA.</title>
        <authorList>
            <person name="Fu J.Q."/>
            <person name="Wang L."/>
            <person name="Chen W."/>
            <person name="Ci H.L."/>
            <person name="Li Y.P."/>
        </authorList>
    </citation>
    <scope>NUCLEOTIDE SEQUENCE [MRNA]</scope>
</reference>
<reference key="2">
    <citation type="submission" date="2003-02" db="EMBL/GenBank/DDBJ databases">
        <title>Full-length cDNA libraries and normalization.</title>
        <authorList>
            <person name="Li W.B."/>
            <person name="Gruber C."/>
            <person name="Jessee J."/>
            <person name="Polayes D."/>
        </authorList>
    </citation>
    <scope>NUCLEOTIDE SEQUENCE [LARGE SCALE MRNA]</scope>
    <source>
        <tissue>Brain</tissue>
    </source>
</reference>
<reference key="3">
    <citation type="journal article" date="2003" name="Genome Res.">
        <title>The secreted protein discovery initiative (SPDI), a large-scale effort to identify novel human secreted and transmembrane proteins: a bioinformatics assessment.</title>
        <authorList>
            <person name="Clark H.F."/>
            <person name="Gurney A.L."/>
            <person name="Abaya E."/>
            <person name="Baker K."/>
            <person name="Baldwin D.T."/>
            <person name="Brush J."/>
            <person name="Chen J."/>
            <person name="Chow B."/>
            <person name="Chui C."/>
            <person name="Crowley C."/>
            <person name="Currell B."/>
            <person name="Deuel B."/>
            <person name="Dowd P."/>
            <person name="Eaton D."/>
            <person name="Foster J.S."/>
            <person name="Grimaldi C."/>
            <person name="Gu Q."/>
            <person name="Hass P.E."/>
            <person name="Heldens S."/>
            <person name="Huang A."/>
            <person name="Kim H.S."/>
            <person name="Klimowski L."/>
            <person name="Jin Y."/>
            <person name="Johnson S."/>
            <person name="Lee J."/>
            <person name="Lewis L."/>
            <person name="Liao D."/>
            <person name="Mark M.R."/>
            <person name="Robbie E."/>
            <person name="Sanchez C."/>
            <person name="Schoenfeld J."/>
            <person name="Seshagiri S."/>
            <person name="Simmons L."/>
            <person name="Singh J."/>
            <person name="Smith V."/>
            <person name="Stinson J."/>
            <person name="Vagts A."/>
            <person name="Vandlen R.L."/>
            <person name="Watanabe C."/>
            <person name="Wieand D."/>
            <person name="Woods K."/>
            <person name="Xie M.-H."/>
            <person name="Yansura D.G."/>
            <person name="Yi S."/>
            <person name="Yu G."/>
            <person name="Yuan J."/>
            <person name="Zhang M."/>
            <person name="Zhang Z."/>
            <person name="Goddard A.D."/>
            <person name="Wood W.I."/>
            <person name="Godowski P.J."/>
            <person name="Gray A.M."/>
        </authorList>
    </citation>
    <scope>NUCLEOTIDE SEQUENCE [LARGE SCALE MRNA]</scope>
</reference>
<reference key="4">
    <citation type="journal article" date="2003" name="Nature">
        <title>The DNA sequence and analysis of human chromosome 14.</title>
        <authorList>
            <person name="Heilig R."/>
            <person name="Eckenberg R."/>
            <person name="Petit J.-L."/>
            <person name="Fonknechten N."/>
            <person name="Da Silva C."/>
            <person name="Cattolico L."/>
            <person name="Levy M."/>
            <person name="Barbe V."/>
            <person name="De Berardinis V."/>
            <person name="Ureta-Vidal A."/>
            <person name="Pelletier E."/>
            <person name="Vico V."/>
            <person name="Anthouard V."/>
            <person name="Rowen L."/>
            <person name="Madan A."/>
            <person name="Qin S."/>
            <person name="Sun H."/>
            <person name="Du H."/>
            <person name="Pepin K."/>
            <person name="Artiguenave F."/>
            <person name="Robert C."/>
            <person name="Cruaud C."/>
            <person name="Bruels T."/>
            <person name="Jaillon O."/>
            <person name="Friedlander L."/>
            <person name="Samson G."/>
            <person name="Brottier P."/>
            <person name="Cure S."/>
            <person name="Segurens B."/>
            <person name="Aniere F."/>
            <person name="Samain S."/>
            <person name="Crespeau H."/>
            <person name="Abbasi N."/>
            <person name="Aiach N."/>
            <person name="Boscus D."/>
            <person name="Dickhoff R."/>
            <person name="Dors M."/>
            <person name="Dubois I."/>
            <person name="Friedman C."/>
            <person name="Gouyvenoux M."/>
            <person name="James R."/>
            <person name="Madan A."/>
            <person name="Mairey-Estrada B."/>
            <person name="Mangenot S."/>
            <person name="Martins N."/>
            <person name="Menard M."/>
            <person name="Oztas S."/>
            <person name="Ratcliffe A."/>
            <person name="Shaffer T."/>
            <person name="Trask B."/>
            <person name="Vacherie B."/>
            <person name="Bellemere C."/>
            <person name="Belser C."/>
            <person name="Besnard-Gonnet M."/>
            <person name="Bartol-Mavel D."/>
            <person name="Boutard M."/>
            <person name="Briez-Silla S."/>
            <person name="Combette S."/>
            <person name="Dufosse-Laurent V."/>
            <person name="Ferron C."/>
            <person name="Lechaplais C."/>
            <person name="Louesse C."/>
            <person name="Muselet D."/>
            <person name="Magdelenat G."/>
            <person name="Pateau E."/>
            <person name="Petit E."/>
            <person name="Sirvain-Trukniewicz P."/>
            <person name="Trybou A."/>
            <person name="Vega-Czarny N."/>
            <person name="Bataille E."/>
            <person name="Bluet E."/>
            <person name="Bordelais I."/>
            <person name="Dubois M."/>
            <person name="Dumont C."/>
            <person name="Guerin T."/>
            <person name="Haffray S."/>
            <person name="Hammadi R."/>
            <person name="Muanga J."/>
            <person name="Pellouin V."/>
            <person name="Robert D."/>
            <person name="Wunderle E."/>
            <person name="Gauguet G."/>
            <person name="Roy A."/>
            <person name="Sainte-Marthe L."/>
            <person name="Verdier J."/>
            <person name="Verdier-Discala C."/>
            <person name="Hillier L.W."/>
            <person name="Fulton L."/>
            <person name="McPherson J."/>
            <person name="Matsuda F."/>
            <person name="Wilson R."/>
            <person name="Scarpelli C."/>
            <person name="Gyapay G."/>
            <person name="Wincker P."/>
            <person name="Saurin W."/>
            <person name="Quetier F."/>
            <person name="Waterston R."/>
            <person name="Hood L."/>
            <person name="Weissenbach J."/>
        </authorList>
    </citation>
    <scope>NUCLEOTIDE SEQUENCE [LARGE SCALE GENOMIC DNA]</scope>
</reference>
<reference key="5">
    <citation type="journal article" date="2004" name="Genome Res.">
        <title>The status, quality, and expansion of the NIH full-length cDNA project: the Mammalian Gene Collection (MGC).</title>
        <authorList>
            <consortium name="The MGC Project Team"/>
        </authorList>
    </citation>
    <scope>NUCLEOTIDE SEQUENCE [LARGE SCALE MRNA]</scope>
</reference>
<reference key="6">
    <citation type="journal article" date="2004" name="Protein Sci.">
        <title>Signal peptide prediction based on analysis of experimentally verified cleavage sites.</title>
        <authorList>
            <person name="Zhang Z."/>
            <person name="Henzel W.J."/>
        </authorList>
    </citation>
    <scope>PROTEIN SEQUENCE OF 22-36</scope>
</reference>
<reference key="7">
    <citation type="journal article" date="2014" name="J. Proteomics">
        <title>An enzyme assisted RP-RPLC approach for in-depth analysis of human liver phosphoproteome.</title>
        <authorList>
            <person name="Bian Y."/>
            <person name="Song C."/>
            <person name="Cheng K."/>
            <person name="Dong M."/>
            <person name="Wang F."/>
            <person name="Huang J."/>
            <person name="Sun D."/>
            <person name="Wang L."/>
            <person name="Ye M."/>
            <person name="Zou H."/>
        </authorList>
    </citation>
    <scope>IDENTIFICATION BY MASS SPECTROMETRY [LARGE SCALE ANALYSIS]</scope>
    <source>
        <tissue>Liver</tissue>
    </source>
</reference>
<organism>
    <name type="scientific">Homo sapiens</name>
    <name type="common">Human</name>
    <dbReference type="NCBI Taxonomy" id="9606"/>
    <lineage>
        <taxon>Eukaryota</taxon>
        <taxon>Metazoa</taxon>
        <taxon>Chordata</taxon>
        <taxon>Craniata</taxon>
        <taxon>Vertebrata</taxon>
        <taxon>Euteleostomi</taxon>
        <taxon>Mammalia</taxon>
        <taxon>Eutheria</taxon>
        <taxon>Euarchontoglires</taxon>
        <taxon>Primates</taxon>
        <taxon>Haplorrhini</taxon>
        <taxon>Catarrhini</taxon>
        <taxon>Hominidae</taxon>
        <taxon>Homo</taxon>
    </lineage>
</organism>
<evidence type="ECO:0000255" key="1"/>
<evidence type="ECO:0000255" key="2">
    <source>
        <dbReference type="PROSITE-ProRule" id="PRU00040"/>
    </source>
</evidence>
<evidence type="ECO:0000256" key="3">
    <source>
        <dbReference type="SAM" id="MobiDB-lite"/>
    </source>
</evidence>
<evidence type="ECO:0000269" key="4">
    <source>
    </source>
</evidence>
<evidence type="ECO:0000305" key="5"/>
<proteinExistence type="evidence at protein level"/>
<gene>
    <name type="primary">CLEC14A</name>
    <name type="synonym">C14orf27</name>
    <name type="synonym">EGFR5</name>
    <name type="ORF">UNQ236/PRO269</name>
</gene>
<comment type="interaction">
    <interactant intactId="EBI-17710733">
        <id>Q86T13</id>
    </interactant>
    <interactant intactId="EBI-721179">
        <id>P27449</id>
        <label>ATP6V0C</label>
    </interactant>
    <organismsDiffer>false</organismsDiffer>
    <experiments>3</experiments>
</comment>
<comment type="interaction">
    <interactant intactId="EBI-17710733">
        <id>Q86T13</id>
    </interactant>
    <interactant intactId="EBI-12256978">
        <id>Q8N6F1-2</id>
        <label>CLDN19</label>
    </interactant>
    <organismsDiffer>false</organismsDiffer>
    <experiments>3</experiments>
</comment>
<comment type="interaction">
    <interactant intactId="EBI-17710733">
        <id>Q86T13</id>
    </interactant>
    <interactant intactId="EBI-9316372">
        <id>O14493</id>
        <label>CLDN4</label>
    </interactant>
    <organismsDiffer>false</organismsDiffer>
    <experiments>3</experiments>
</comment>
<comment type="interaction">
    <interactant intactId="EBI-17710733">
        <id>Q86T13</id>
    </interactant>
    <interactant intactId="EBI-717654">
        <id>O14569</id>
        <label>CYB561D2</label>
    </interactant>
    <organismsDiffer>false</organismsDiffer>
    <experiments>3</experiments>
</comment>
<comment type="interaction">
    <interactant intactId="EBI-17710733">
        <id>Q86T13</id>
    </interactant>
    <interactant intactId="EBI-489887">
        <id>P50402</id>
        <label>EMD</label>
    </interactant>
    <organismsDiffer>false</organismsDiffer>
    <experiments>3</experiments>
</comment>
<comment type="interaction">
    <interactant intactId="EBI-17710733">
        <id>Q86T13</id>
    </interactant>
    <interactant intactId="EBI-2820517">
        <id>Q8TAF8</id>
        <label>LHFPL5</label>
    </interactant>
    <organismsDiffer>false</organismsDiffer>
    <experiments>3</experiments>
</comment>
<comment type="interaction">
    <interactant intactId="EBI-17710733">
        <id>Q86T13</id>
    </interactant>
    <interactant intactId="EBI-750078">
        <id>Q13021</id>
        <label>MALL</label>
    </interactant>
    <organismsDiffer>false</organismsDiffer>
    <experiments>3</experiments>
</comment>
<comment type="interaction">
    <interactant intactId="EBI-17710733">
        <id>Q86T13</id>
    </interactant>
    <interactant intactId="EBI-11324706">
        <id>Q99735</id>
        <label>MGST2</label>
    </interactant>
    <organismsDiffer>false</organismsDiffer>
    <experiments>3</experiments>
</comment>
<comment type="interaction">
    <interactant intactId="EBI-17710733">
        <id>Q86T13</id>
    </interactant>
    <interactant intactId="EBI-2808234">
        <id>P11836</id>
        <label>MS4A1</label>
    </interactant>
    <organismsDiffer>false</organismsDiffer>
    <experiments>3</experiments>
</comment>
<comment type="interaction">
    <interactant intactId="EBI-17710733">
        <id>Q86T13</id>
    </interactant>
    <interactant intactId="EBI-2845982">
        <id>Q01453</id>
        <label>PMP22</label>
    </interactant>
    <organismsDiffer>false</organismsDiffer>
    <experiments>3</experiments>
</comment>
<comment type="interaction">
    <interactant intactId="EBI-17710733">
        <id>Q86T13</id>
    </interactant>
    <interactant intactId="EBI-12887458">
        <id>Q9BU79</id>
        <label>TMEM243</label>
    </interactant>
    <organismsDiffer>false</organismsDiffer>
    <experiments>3</experiments>
</comment>
<comment type="interaction">
    <interactant intactId="EBI-17710733">
        <id>Q86T13</id>
    </interactant>
    <interactant intactId="EBI-3914288">
        <id>O60636</id>
        <label>TSPAN2</label>
    </interactant>
    <organismsDiffer>false</organismsDiffer>
    <experiments>3</experiments>
</comment>
<comment type="interaction">
    <interactant intactId="EBI-17710733">
        <id>Q86T13</id>
    </interactant>
    <interactant intactId="EBI-722343">
        <id>Q15836</id>
        <label>VAMP3</label>
    </interactant>
    <organismsDiffer>false</organismsDiffer>
    <experiments>3</experiments>
</comment>
<comment type="subcellular location">
    <subcellularLocation>
        <location evidence="5">Membrane</location>
        <topology evidence="5">Single-pass type I membrane protein</topology>
    </subcellularLocation>
</comment>
<protein>
    <recommendedName>
        <fullName>C-type lectin domain family 14 member A</fullName>
    </recommendedName>
    <alternativeName>
        <fullName>Epidermal growth factor receptor 5</fullName>
        <shortName>EGFR-5</shortName>
    </alternativeName>
</protein>
<feature type="signal peptide" evidence="4">
    <location>
        <begin position="1"/>
        <end position="21"/>
    </location>
</feature>
<feature type="chain" id="PRO_0000017377" description="C-type lectin domain family 14 member A">
    <location>
        <begin position="22"/>
        <end position="490"/>
    </location>
</feature>
<feature type="topological domain" description="Extracellular" evidence="1">
    <location>
        <begin position="22"/>
        <end position="397"/>
    </location>
</feature>
<feature type="transmembrane region" description="Helical" evidence="1">
    <location>
        <begin position="398"/>
        <end position="418"/>
    </location>
</feature>
<feature type="topological domain" description="Cytoplasmic" evidence="1">
    <location>
        <begin position="419"/>
        <end position="490"/>
    </location>
</feature>
<feature type="domain" description="C-type lectin" evidence="2">
    <location>
        <begin position="33"/>
        <end position="173"/>
    </location>
</feature>
<feature type="domain" description="EGF-like">
    <location>
        <begin position="245"/>
        <end position="287"/>
    </location>
</feature>
<feature type="region of interest" description="Disordered" evidence="3">
    <location>
        <begin position="286"/>
        <end position="349"/>
    </location>
</feature>
<feature type="region of interest" description="Disordered" evidence="3">
    <location>
        <begin position="428"/>
        <end position="461"/>
    </location>
</feature>
<feature type="compositionally biased region" description="Low complexity" evidence="3">
    <location>
        <begin position="301"/>
        <end position="315"/>
    </location>
</feature>
<feature type="glycosylation site" description="N-linked (GlcNAc...) asparagine" evidence="1">
    <location>
        <position position="189"/>
    </location>
</feature>
<feature type="glycosylation site" description="N-linked (GlcNAc...) asparagine" evidence="1">
    <location>
        <position position="381"/>
    </location>
</feature>
<feature type="disulfide bond" evidence="2">
    <location>
        <begin position="143"/>
        <end position="162"/>
    </location>
</feature>
<feature type="sequence conflict" description="In Ref. 1; AAS77882." evidence="5" ref="1">
    <original>Q</original>
    <variation>H</variation>
    <location>
        <position position="432"/>
    </location>
</feature>
<feature type="sequence conflict" description="In Ref. 1; AAS77882." evidence="5" ref="1">
    <original>S</original>
    <variation>F</variation>
    <location>
        <position position="437"/>
    </location>
</feature>
<name>CLC14_HUMAN</name>
<accession>Q86T13</accession>
<accession>Q695G9</accession>
<accession>Q6PWT6</accession>
<accession>Q8N5V5</accession>
<keyword id="KW-0903">Direct protein sequencing</keyword>
<keyword id="KW-1015">Disulfide bond</keyword>
<keyword id="KW-0245">EGF-like domain</keyword>
<keyword id="KW-0325">Glycoprotein</keyword>
<keyword id="KW-0430">Lectin</keyword>
<keyword id="KW-0472">Membrane</keyword>
<keyword id="KW-1267">Proteomics identification</keyword>
<keyword id="KW-1185">Reference proteome</keyword>
<keyword id="KW-0732">Signal</keyword>
<keyword id="KW-0812">Transmembrane</keyword>
<keyword id="KW-1133">Transmembrane helix</keyword>
<dbReference type="EMBL" id="AY573061">
    <property type="protein sequence ID" value="AAS77882.1"/>
    <property type="molecule type" value="mRNA"/>
</dbReference>
<dbReference type="EMBL" id="AY606132">
    <property type="protein sequence ID" value="AAT92280.1"/>
    <property type="molecule type" value="mRNA"/>
</dbReference>
<dbReference type="EMBL" id="BX248017">
    <property type="protein sequence ID" value="CAD62342.1"/>
    <property type="molecule type" value="mRNA"/>
</dbReference>
<dbReference type="EMBL" id="AY358395">
    <property type="protein sequence ID" value="AAQ88761.1"/>
    <property type="molecule type" value="mRNA"/>
</dbReference>
<dbReference type="EMBL" id="AL161751">
    <property type="status" value="NOT_ANNOTATED_CDS"/>
    <property type="molecule type" value="Genomic_DNA"/>
</dbReference>
<dbReference type="EMBL" id="BC031567">
    <property type="protein sequence ID" value="AAH31567.2"/>
    <property type="molecule type" value="mRNA"/>
</dbReference>
<dbReference type="CCDS" id="CCDS9667.1"/>
<dbReference type="RefSeq" id="NP_778230.1">
    <property type="nucleotide sequence ID" value="NM_175060.3"/>
</dbReference>
<dbReference type="SMR" id="Q86T13"/>
<dbReference type="BioGRID" id="127776">
    <property type="interactions" value="89"/>
</dbReference>
<dbReference type="FunCoup" id="Q86T13">
    <property type="interactions" value="36"/>
</dbReference>
<dbReference type="IntAct" id="Q86T13">
    <property type="interactions" value="35"/>
</dbReference>
<dbReference type="STRING" id="9606.ENSP00000353013"/>
<dbReference type="DrugBank" id="DB02709">
    <property type="generic name" value="Resveratrol"/>
</dbReference>
<dbReference type="GlyCosmos" id="Q86T13">
    <property type="glycosylation" value="4 sites, 3 glycans"/>
</dbReference>
<dbReference type="GlyGen" id="Q86T13">
    <property type="glycosylation" value="4 sites, 5 N-linked glycans (1 site), 3 O-linked glycans (2 sites)"/>
</dbReference>
<dbReference type="iPTMnet" id="Q86T13"/>
<dbReference type="PhosphoSitePlus" id="Q86T13"/>
<dbReference type="SwissPalm" id="Q86T13"/>
<dbReference type="BioMuta" id="CLEC14A"/>
<dbReference type="DMDM" id="34582300"/>
<dbReference type="MassIVE" id="Q86T13"/>
<dbReference type="PaxDb" id="9606-ENSP00000353013"/>
<dbReference type="PeptideAtlas" id="Q86T13"/>
<dbReference type="ProteomicsDB" id="69656"/>
<dbReference type="Antibodypedia" id="23322">
    <property type="antibodies" value="238 antibodies from 29 providers"/>
</dbReference>
<dbReference type="DNASU" id="161198"/>
<dbReference type="Ensembl" id="ENST00000342213.3">
    <property type="protein sequence ID" value="ENSP00000353013.2"/>
    <property type="gene ID" value="ENSG00000176435.7"/>
</dbReference>
<dbReference type="GeneID" id="161198"/>
<dbReference type="KEGG" id="hsa:161198"/>
<dbReference type="MANE-Select" id="ENST00000342213.3">
    <property type="protein sequence ID" value="ENSP00000353013.2"/>
    <property type="RefSeq nucleotide sequence ID" value="NM_175060.3"/>
    <property type="RefSeq protein sequence ID" value="NP_778230.1"/>
</dbReference>
<dbReference type="UCSC" id="uc001wum.3">
    <property type="organism name" value="human"/>
</dbReference>
<dbReference type="AGR" id="HGNC:19832"/>
<dbReference type="CTD" id="161198"/>
<dbReference type="DisGeNET" id="161198"/>
<dbReference type="GeneCards" id="CLEC14A"/>
<dbReference type="HGNC" id="HGNC:19832">
    <property type="gene designation" value="CLEC14A"/>
</dbReference>
<dbReference type="HPA" id="ENSG00000176435">
    <property type="expression patterns" value="Low tissue specificity"/>
</dbReference>
<dbReference type="neXtProt" id="NX_Q86T13"/>
<dbReference type="OpenTargets" id="ENSG00000176435"/>
<dbReference type="PharmGKB" id="PA134890576"/>
<dbReference type="VEuPathDB" id="HostDB:ENSG00000176435"/>
<dbReference type="eggNOG" id="ENOG502S0KN">
    <property type="taxonomic scope" value="Eukaryota"/>
</dbReference>
<dbReference type="GeneTree" id="ENSGT00930000151088"/>
<dbReference type="HOGENOM" id="CLU_593913_0_0_1"/>
<dbReference type="InParanoid" id="Q86T13"/>
<dbReference type="OMA" id="ELPNCLD"/>
<dbReference type="OrthoDB" id="9890094at2759"/>
<dbReference type="PAN-GO" id="Q86T13">
    <property type="GO annotations" value="4 GO annotations based on evolutionary models"/>
</dbReference>
<dbReference type="PhylomeDB" id="Q86T13"/>
<dbReference type="TreeFam" id="TF330714"/>
<dbReference type="PathwayCommons" id="Q86T13"/>
<dbReference type="SignaLink" id="Q86T13"/>
<dbReference type="BioGRID-ORCS" id="161198">
    <property type="hits" value="12 hits in 1147 CRISPR screens"/>
</dbReference>
<dbReference type="ChiTaRS" id="CLEC14A">
    <property type="organism name" value="human"/>
</dbReference>
<dbReference type="GenomeRNAi" id="161198"/>
<dbReference type="Pharos" id="Q86T13">
    <property type="development level" value="Tbio"/>
</dbReference>
<dbReference type="PRO" id="PR:Q86T13"/>
<dbReference type="Proteomes" id="UP000005640">
    <property type="component" value="Chromosome 14"/>
</dbReference>
<dbReference type="RNAct" id="Q86T13">
    <property type="molecule type" value="protein"/>
</dbReference>
<dbReference type="Bgee" id="ENSG00000176435">
    <property type="expression patterns" value="Expressed in apex of heart and 171 other cell types or tissues"/>
</dbReference>
<dbReference type="GO" id="GO:0062023">
    <property type="term" value="C:collagen-containing extracellular matrix"/>
    <property type="evidence" value="ECO:0007005"/>
    <property type="project" value="BHF-UCL"/>
</dbReference>
<dbReference type="GO" id="GO:0009897">
    <property type="term" value="C:external side of plasma membrane"/>
    <property type="evidence" value="ECO:0000314"/>
    <property type="project" value="MGI"/>
</dbReference>
<dbReference type="GO" id="GO:0030246">
    <property type="term" value="F:carbohydrate binding"/>
    <property type="evidence" value="ECO:0007669"/>
    <property type="project" value="UniProtKB-KW"/>
</dbReference>
<dbReference type="GO" id="GO:0050840">
    <property type="term" value="F:extracellular matrix binding"/>
    <property type="evidence" value="ECO:0000318"/>
    <property type="project" value="GO_Central"/>
</dbReference>
<dbReference type="GO" id="GO:1990430">
    <property type="term" value="F:extracellular matrix protein binding"/>
    <property type="evidence" value="ECO:0000314"/>
    <property type="project" value="MGI"/>
</dbReference>
<dbReference type="GO" id="GO:0016477">
    <property type="term" value="P:cell migration"/>
    <property type="evidence" value="ECO:0000318"/>
    <property type="project" value="GO_Central"/>
</dbReference>
<dbReference type="GO" id="GO:0002042">
    <property type="term" value="P:cell migration involved in sprouting angiogenesis"/>
    <property type="evidence" value="ECO:0007669"/>
    <property type="project" value="Ensembl"/>
</dbReference>
<dbReference type="GO" id="GO:0001946">
    <property type="term" value="P:lymphangiogenesis"/>
    <property type="evidence" value="ECO:0007669"/>
    <property type="project" value="Ensembl"/>
</dbReference>
<dbReference type="GO" id="GO:0036324">
    <property type="term" value="P:vascular endothelial growth factor receptor-2 signaling pathway"/>
    <property type="evidence" value="ECO:0000315"/>
    <property type="project" value="GO_Central"/>
</dbReference>
<dbReference type="GO" id="GO:0036325">
    <property type="term" value="P:vascular endothelial growth factor receptor-3 signaling pathway"/>
    <property type="evidence" value="ECO:0000315"/>
    <property type="project" value="GO_Central"/>
</dbReference>
<dbReference type="CDD" id="cd03600">
    <property type="entry name" value="CLECT_thrombomodulin_like"/>
    <property type="match status" value="1"/>
</dbReference>
<dbReference type="FunFam" id="2.10.25.10:FF:000736">
    <property type="entry name" value="C-type lectin domain family 14 member A"/>
    <property type="match status" value="1"/>
</dbReference>
<dbReference type="FunFam" id="3.10.100.10:FF:000084">
    <property type="entry name" value="C-type lectin domain family 14 member A"/>
    <property type="match status" value="1"/>
</dbReference>
<dbReference type="Gene3D" id="2.10.25.10">
    <property type="entry name" value="Laminin"/>
    <property type="match status" value="1"/>
</dbReference>
<dbReference type="Gene3D" id="3.10.100.10">
    <property type="entry name" value="Mannose-Binding Protein A, subunit A"/>
    <property type="match status" value="1"/>
</dbReference>
<dbReference type="InterPro" id="IPR001304">
    <property type="entry name" value="C-type_lectin-like"/>
</dbReference>
<dbReference type="InterPro" id="IPR016186">
    <property type="entry name" value="C-type_lectin-like/link_sf"/>
</dbReference>
<dbReference type="InterPro" id="IPR051505">
    <property type="entry name" value="C-type_lectin_domain"/>
</dbReference>
<dbReference type="InterPro" id="IPR016187">
    <property type="entry name" value="CTDL_fold"/>
</dbReference>
<dbReference type="PANTHER" id="PTHR14789:SF5">
    <property type="entry name" value="C-TYPE LECTIN DOMAIN FAMILY 14 MEMBER A"/>
    <property type="match status" value="1"/>
</dbReference>
<dbReference type="PANTHER" id="PTHR14789">
    <property type="entry name" value="CHONDROLECTIN VARIANT CHODLFDELTAE"/>
    <property type="match status" value="1"/>
</dbReference>
<dbReference type="SMART" id="SM00034">
    <property type="entry name" value="CLECT"/>
    <property type="match status" value="1"/>
</dbReference>
<dbReference type="SUPFAM" id="SSF56436">
    <property type="entry name" value="C-type lectin-like"/>
    <property type="match status" value="1"/>
</dbReference>
<dbReference type="SUPFAM" id="SSF57196">
    <property type="entry name" value="EGF/Laminin"/>
    <property type="match status" value="1"/>
</dbReference>
<dbReference type="PROSITE" id="PS00010">
    <property type="entry name" value="ASX_HYDROXYL"/>
    <property type="match status" value="1"/>
</dbReference>
<dbReference type="PROSITE" id="PS50041">
    <property type="entry name" value="C_TYPE_LECTIN_2"/>
    <property type="match status" value="1"/>
</dbReference>
<dbReference type="PROSITE" id="PS01186">
    <property type="entry name" value="EGF_2"/>
    <property type="match status" value="1"/>
</dbReference>